<organism>
    <name type="scientific">Rickettsia bellii (strain RML369-C)</name>
    <dbReference type="NCBI Taxonomy" id="336407"/>
    <lineage>
        <taxon>Bacteria</taxon>
        <taxon>Pseudomonadati</taxon>
        <taxon>Pseudomonadota</taxon>
        <taxon>Alphaproteobacteria</taxon>
        <taxon>Rickettsiales</taxon>
        <taxon>Rickettsiaceae</taxon>
        <taxon>Rickettsieae</taxon>
        <taxon>Rickettsia</taxon>
        <taxon>belli group</taxon>
    </lineage>
</organism>
<proteinExistence type="inferred from homology"/>
<reference key="1">
    <citation type="journal article" date="2006" name="PLoS Genet.">
        <title>Genome sequence of Rickettsia bellii illuminates the role of amoebae in gene exchanges between intracellular pathogens.</title>
        <authorList>
            <person name="Ogata H."/>
            <person name="La Scola B."/>
            <person name="Audic S."/>
            <person name="Renesto P."/>
            <person name="Blanc G."/>
            <person name="Robert C."/>
            <person name="Fournier P.-E."/>
            <person name="Claverie J.-M."/>
            <person name="Raoult D."/>
        </authorList>
    </citation>
    <scope>NUCLEOTIDE SEQUENCE [LARGE SCALE GENOMIC DNA]</scope>
    <source>
        <strain>RML369-C</strain>
    </source>
</reference>
<accession>Q1RHM7</accession>
<dbReference type="EMBL" id="CP000087">
    <property type="protein sequence ID" value="ABE05137.1"/>
    <property type="molecule type" value="Genomic_DNA"/>
</dbReference>
<dbReference type="RefSeq" id="WP_011477715.1">
    <property type="nucleotide sequence ID" value="NC_007940.1"/>
</dbReference>
<dbReference type="SMR" id="Q1RHM7"/>
<dbReference type="KEGG" id="rbe:RBE_1056"/>
<dbReference type="eggNOG" id="COG0092">
    <property type="taxonomic scope" value="Bacteria"/>
</dbReference>
<dbReference type="HOGENOM" id="CLU_058591_0_2_5"/>
<dbReference type="OrthoDB" id="9806396at2"/>
<dbReference type="Proteomes" id="UP000001951">
    <property type="component" value="Chromosome"/>
</dbReference>
<dbReference type="GO" id="GO:0022627">
    <property type="term" value="C:cytosolic small ribosomal subunit"/>
    <property type="evidence" value="ECO:0007669"/>
    <property type="project" value="TreeGrafter"/>
</dbReference>
<dbReference type="GO" id="GO:0003729">
    <property type="term" value="F:mRNA binding"/>
    <property type="evidence" value="ECO:0007669"/>
    <property type="project" value="UniProtKB-UniRule"/>
</dbReference>
<dbReference type="GO" id="GO:0019843">
    <property type="term" value="F:rRNA binding"/>
    <property type="evidence" value="ECO:0007669"/>
    <property type="project" value="UniProtKB-UniRule"/>
</dbReference>
<dbReference type="GO" id="GO:0003735">
    <property type="term" value="F:structural constituent of ribosome"/>
    <property type="evidence" value="ECO:0007669"/>
    <property type="project" value="InterPro"/>
</dbReference>
<dbReference type="GO" id="GO:0006412">
    <property type="term" value="P:translation"/>
    <property type="evidence" value="ECO:0007669"/>
    <property type="project" value="UniProtKB-UniRule"/>
</dbReference>
<dbReference type="CDD" id="cd02412">
    <property type="entry name" value="KH-II_30S_S3"/>
    <property type="match status" value="1"/>
</dbReference>
<dbReference type="FunFam" id="3.30.300.20:FF:000001">
    <property type="entry name" value="30S ribosomal protein S3"/>
    <property type="match status" value="1"/>
</dbReference>
<dbReference type="Gene3D" id="3.30.300.20">
    <property type="match status" value="1"/>
</dbReference>
<dbReference type="Gene3D" id="3.30.1140.32">
    <property type="entry name" value="Ribosomal protein S3, C-terminal domain"/>
    <property type="match status" value="1"/>
</dbReference>
<dbReference type="HAMAP" id="MF_01309_B">
    <property type="entry name" value="Ribosomal_uS3_B"/>
    <property type="match status" value="1"/>
</dbReference>
<dbReference type="InterPro" id="IPR004087">
    <property type="entry name" value="KH_dom"/>
</dbReference>
<dbReference type="InterPro" id="IPR015946">
    <property type="entry name" value="KH_dom-like_a/b"/>
</dbReference>
<dbReference type="InterPro" id="IPR004044">
    <property type="entry name" value="KH_dom_type_2"/>
</dbReference>
<dbReference type="InterPro" id="IPR009019">
    <property type="entry name" value="KH_sf_prok-type"/>
</dbReference>
<dbReference type="InterPro" id="IPR036419">
    <property type="entry name" value="Ribosomal_S3_C_sf"/>
</dbReference>
<dbReference type="InterPro" id="IPR005704">
    <property type="entry name" value="Ribosomal_uS3_bac-typ"/>
</dbReference>
<dbReference type="InterPro" id="IPR001351">
    <property type="entry name" value="Ribosomal_uS3_C"/>
</dbReference>
<dbReference type="InterPro" id="IPR018280">
    <property type="entry name" value="Ribosomal_uS3_CS"/>
</dbReference>
<dbReference type="NCBIfam" id="TIGR01009">
    <property type="entry name" value="rpsC_bact"/>
    <property type="match status" value="1"/>
</dbReference>
<dbReference type="PANTHER" id="PTHR11760">
    <property type="entry name" value="30S/40S RIBOSOMAL PROTEIN S3"/>
    <property type="match status" value="1"/>
</dbReference>
<dbReference type="PANTHER" id="PTHR11760:SF19">
    <property type="entry name" value="SMALL RIBOSOMAL SUBUNIT PROTEIN US3C"/>
    <property type="match status" value="1"/>
</dbReference>
<dbReference type="Pfam" id="PF07650">
    <property type="entry name" value="KH_2"/>
    <property type="match status" value="1"/>
</dbReference>
<dbReference type="Pfam" id="PF00189">
    <property type="entry name" value="Ribosomal_S3_C"/>
    <property type="match status" value="1"/>
</dbReference>
<dbReference type="SMART" id="SM00322">
    <property type="entry name" value="KH"/>
    <property type="match status" value="1"/>
</dbReference>
<dbReference type="SUPFAM" id="SSF54814">
    <property type="entry name" value="Prokaryotic type KH domain (KH-domain type II)"/>
    <property type="match status" value="1"/>
</dbReference>
<dbReference type="SUPFAM" id="SSF54821">
    <property type="entry name" value="Ribosomal protein S3 C-terminal domain"/>
    <property type="match status" value="1"/>
</dbReference>
<dbReference type="PROSITE" id="PS50823">
    <property type="entry name" value="KH_TYPE_2"/>
    <property type="match status" value="1"/>
</dbReference>
<dbReference type="PROSITE" id="PS00548">
    <property type="entry name" value="RIBOSOMAL_S3"/>
    <property type="match status" value="1"/>
</dbReference>
<sequence>MGQKVCAHGFRVGPTLIKGWDSVFYAEKQYKTLFIQDLKIRELVNKSFTQAQVSRILIERPSNKSIIININAKKPNIIIGKNGSEIDKLKKAIEKMTSLSEVYINIHEVRKFNIDAAIVAQTIASQLEKRVSFRKAMKTAIQASFKQGGQGIRVSCSGRLGGAEIARTEWYIEGRMPLHTLRADIDYSTAEAITTYGVIGVKVWIYKGEYTENKRYN</sequence>
<comment type="function">
    <text evidence="1">Binds the lower part of the 30S subunit head. Binds mRNA in the 70S ribosome, positioning it for translation.</text>
</comment>
<comment type="subunit">
    <text evidence="1">Part of the 30S ribosomal subunit. Forms a tight complex with proteins S10 and S14.</text>
</comment>
<comment type="similarity">
    <text evidence="1">Belongs to the universal ribosomal protein uS3 family.</text>
</comment>
<name>RS3_RICBR</name>
<keyword id="KW-0687">Ribonucleoprotein</keyword>
<keyword id="KW-0689">Ribosomal protein</keyword>
<keyword id="KW-0694">RNA-binding</keyword>
<keyword id="KW-0699">rRNA-binding</keyword>
<feature type="chain" id="PRO_0000272395" description="Small ribosomal subunit protein uS3">
    <location>
        <begin position="1"/>
        <end position="217"/>
    </location>
</feature>
<feature type="domain" description="KH type-2" evidence="1">
    <location>
        <begin position="40"/>
        <end position="110"/>
    </location>
</feature>
<protein>
    <recommendedName>
        <fullName evidence="1">Small ribosomal subunit protein uS3</fullName>
    </recommendedName>
    <alternativeName>
        <fullName evidence="2">30S ribosomal protein S3</fullName>
    </alternativeName>
</protein>
<evidence type="ECO:0000255" key="1">
    <source>
        <dbReference type="HAMAP-Rule" id="MF_01309"/>
    </source>
</evidence>
<evidence type="ECO:0000305" key="2"/>
<gene>
    <name evidence="1" type="primary">rpsC</name>
    <name type="ordered locus">RBE_1056</name>
</gene>